<reference key="1">
    <citation type="journal article" date="2009" name="PLoS ONE">
        <title>Genome degradation in Brucella ovis corresponds with narrowing of its host range and tissue tropism.</title>
        <authorList>
            <person name="Tsolis R.M."/>
            <person name="Seshadri R."/>
            <person name="Santos R.L."/>
            <person name="Sangari F.J."/>
            <person name="Lobo J.M."/>
            <person name="de Jong M.F."/>
            <person name="Ren Q."/>
            <person name="Myers G."/>
            <person name="Brinkac L.M."/>
            <person name="Nelson W.C."/>
            <person name="Deboy R.T."/>
            <person name="Angiuoli S."/>
            <person name="Khouri H."/>
            <person name="Dimitrov G."/>
            <person name="Robinson J.R."/>
            <person name="Mulligan S."/>
            <person name="Walker R.L."/>
            <person name="Elzer P.E."/>
            <person name="Hassan K.A."/>
            <person name="Paulsen I.T."/>
        </authorList>
    </citation>
    <scope>NUCLEOTIDE SEQUENCE [LARGE SCALE GENOMIC DNA]</scope>
    <source>
        <strain>ATCC 25840 / 63/290 / NCTC 10512</strain>
    </source>
</reference>
<sequence>MKGFMIAAPASGSGKTTVTLGLLRALKRRGEVLAPVKAGPDYIDPAYHRAASGVDCFNLDPWAMRPELISALSSRMTESGARVLVAEGMMGLFDGAIDGKGSSADLARLLDLPVVLVVDCARQSHSIAALVWGFSQFRKDVLIEGVILNRVGSPRHEAMLRGALAPLGVPVLGALPRDPALSLPERHLGLVQADEHAGLESFLEQAADVMEAHIDMDALQTIWLRPKRYDAMANVARLKPLGNRIAVARDDAFAFAYMHLFEGWRRRGAEISFFSPLADEAPKADADAIYLPGGYPELHAQRLAGAPRFRTAIGDAAARGVTAYGECGGYMVLGKTLEDAAGVHHPMLGLLPLETSFARRKLHLGYRLLEPLGGLPWDMPLKAHEFHYASIVREEKADRLFRVRDASGENLGEAGLRVGSVSGSFMHVIDFSGEAA</sequence>
<dbReference type="EC" id="6.3.5.9" evidence="1"/>
<dbReference type="EMBL" id="CP000708">
    <property type="protein sequence ID" value="ABQ60390.1"/>
    <property type="molecule type" value="Genomic_DNA"/>
</dbReference>
<dbReference type="RefSeq" id="WP_006012988.1">
    <property type="nucleotide sequence ID" value="NC_009505.1"/>
</dbReference>
<dbReference type="SMR" id="A5VR62"/>
<dbReference type="GeneID" id="45124657"/>
<dbReference type="KEGG" id="bov:BOV_1259"/>
<dbReference type="HOGENOM" id="CLU_022752_0_0_5"/>
<dbReference type="PhylomeDB" id="A5VR62"/>
<dbReference type="UniPathway" id="UPA00148">
    <property type="reaction ID" value="UER00220"/>
</dbReference>
<dbReference type="PRO" id="PR:A5VR62"/>
<dbReference type="Proteomes" id="UP000006383">
    <property type="component" value="Chromosome I"/>
</dbReference>
<dbReference type="GO" id="GO:0005524">
    <property type="term" value="F:ATP binding"/>
    <property type="evidence" value="ECO:0007669"/>
    <property type="project" value="UniProtKB-UniRule"/>
</dbReference>
<dbReference type="GO" id="GO:0042242">
    <property type="term" value="F:cobyrinic acid a,c-diamide synthase activity"/>
    <property type="evidence" value="ECO:0007669"/>
    <property type="project" value="InterPro"/>
</dbReference>
<dbReference type="GO" id="GO:0043802">
    <property type="term" value="F:hydrogenobyrinic acid a,c-diamide synthase (glutamine-hydrolysing) activity"/>
    <property type="evidence" value="ECO:0007669"/>
    <property type="project" value="UniProtKB-UniRule"/>
</dbReference>
<dbReference type="GO" id="GO:0009236">
    <property type="term" value="P:cobalamin biosynthetic process"/>
    <property type="evidence" value="ECO:0007669"/>
    <property type="project" value="UniProtKB-UniRule"/>
</dbReference>
<dbReference type="Gene3D" id="3.40.50.880">
    <property type="match status" value="1"/>
</dbReference>
<dbReference type="Gene3D" id="3.40.50.300">
    <property type="entry name" value="P-loop containing nucleotide triphosphate hydrolases"/>
    <property type="match status" value="1"/>
</dbReference>
<dbReference type="HAMAP" id="MF_00027">
    <property type="entry name" value="CobB_CbiA"/>
    <property type="match status" value="1"/>
</dbReference>
<dbReference type="InterPro" id="IPR004484">
    <property type="entry name" value="CbiA/CobB_synth"/>
</dbReference>
<dbReference type="InterPro" id="IPR029062">
    <property type="entry name" value="Class_I_gatase-like"/>
</dbReference>
<dbReference type="InterPro" id="IPR002586">
    <property type="entry name" value="CobQ/CobB/MinD/ParA_Nub-bd_dom"/>
</dbReference>
<dbReference type="InterPro" id="IPR011698">
    <property type="entry name" value="GATase_3"/>
</dbReference>
<dbReference type="InterPro" id="IPR027417">
    <property type="entry name" value="P-loop_NTPase"/>
</dbReference>
<dbReference type="NCBIfam" id="TIGR00379">
    <property type="entry name" value="cobB"/>
    <property type="match status" value="1"/>
</dbReference>
<dbReference type="NCBIfam" id="NF002204">
    <property type="entry name" value="PRK01077.1"/>
    <property type="match status" value="1"/>
</dbReference>
<dbReference type="PANTHER" id="PTHR43873">
    <property type="entry name" value="COBYRINATE A,C-DIAMIDE SYNTHASE"/>
    <property type="match status" value="1"/>
</dbReference>
<dbReference type="PANTHER" id="PTHR43873:SF1">
    <property type="entry name" value="COBYRINATE A,C-DIAMIDE SYNTHASE"/>
    <property type="match status" value="1"/>
</dbReference>
<dbReference type="Pfam" id="PF01656">
    <property type="entry name" value="CbiA"/>
    <property type="match status" value="1"/>
</dbReference>
<dbReference type="Pfam" id="PF07685">
    <property type="entry name" value="GATase_3"/>
    <property type="match status" value="1"/>
</dbReference>
<dbReference type="SUPFAM" id="SSF52317">
    <property type="entry name" value="Class I glutamine amidotransferase-like"/>
    <property type="match status" value="1"/>
</dbReference>
<dbReference type="SUPFAM" id="SSF52540">
    <property type="entry name" value="P-loop containing nucleoside triphosphate hydrolases"/>
    <property type="match status" value="1"/>
</dbReference>
<dbReference type="PROSITE" id="PS51274">
    <property type="entry name" value="GATASE_COBBQ"/>
    <property type="match status" value="1"/>
</dbReference>
<organism>
    <name type="scientific">Brucella ovis (strain ATCC 25840 / 63/290 / NCTC 10512)</name>
    <dbReference type="NCBI Taxonomy" id="444178"/>
    <lineage>
        <taxon>Bacteria</taxon>
        <taxon>Pseudomonadati</taxon>
        <taxon>Pseudomonadota</taxon>
        <taxon>Alphaproteobacteria</taxon>
        <taxon>Hyphomicrobiales</taxon>
        <taxon>Brucellaceae</taxon>
        <taxon>Brucella/Ochrobactrum group</taxon>
        <taxon>Brucella</taxon>
    </lineage>
</organism>
<name>COBB_BRUO2</name>
<protein>
    <recommendedName>
        <fullName evidence="1">Hydrogenobyrinate a,c-diamide synthase</fullName>
        <ecNumber evidence="1">6.3.5.9</ecNumber>
    </recommendedName>
    <alternativeName>
        <fullName evidence="1">Hydrogenobyrinic acid a,c-diamide synthase</fullName>
    </alternativeName>
</protein>
<proteinExistence type="inferred from homology"/>
<gene>
    <name evidence="1" type="primary">cobB</name>
    <name type="ordered locus">BOV_1259</name>
</gene>
<keyword id="KW-0067">ATP-binding</keyword>
<keyword id="KW-0169">Cobalamin biosynthesis</keyword>
<keyword id="KW-0315">Glutamine amidotransferase</keyword>
<keyword id="KW-0436">Ligase</keyword>
<keyword id="KW-0460">Magnesium</keyword>
<keyword id="KW-0547">Nucleotide-binding</keyword>
<accession>A5VR62</accession>
<feature type="chain" id="PRO_1000002289" description="Hydrogenobyrinate a,c-diamide synthase">
    <location>
        <begin position="1"/>
        <end position="436"/>
    </location>
</feature>
<feature type="domain" description="GATase cobBQ-type" evidence="1">
    <location>
        <begin position="244"/>
        <end position="435"/>
    </location>
</feature>
<feature type="active site" description="Nucleophile" evidence="1">
    <location>
        <position position="327"/>
    </location>
</feature>
<feature type="site" description="Increases nucleophilicity of active site Cys" evidence="1">
    <location>
        <position position="427"/>
    </location>
</feature>
<evidence type="ECO:0000255" key="1">
    <source>
        <dbReference type="HAMAP-Rule" id="MF_00027"/>
    </source>
</evidence>
<comment type="function">
    <text evidence="1">Catalyzes the ATP-dependent amidation of the two carboxylate groups at positions a and c of hydrogenobyrinate, using either L-glutamine or ammonia as the nitrogen source.</text>
</comment>
<comment type="catalytic activity">
    <reaction evidence="1">
        <text>hydrogenobyrinate + 2 L-glutamine + 2 ATP + 2 H2O = hydrogenobyrinate a,c-diamide + 2 L-glutamate + 2 ADP + 2 phosphate + 2 H(+)</text>
        <dbReference type="Rhea" id="RHEA:12544"/>
        <dbReference type="ChEBI" id="CHEBI:15377"/>
        <dbReference type="ChEBI" id="CHEBI:15378"/>
        <dbReference type="ChEBI" id="CHEBI:29985"/>
        <dbReference type="ChEBI" id="CHEBI:30616"/>
        <dbReference type="ChEBI" id="CHEBI:43474"/>
        <dbReference type="ChEBI" id="CHEBI:58359"/>
        <dbReference type="ChEBI" id="CHEBI:77873"/>
        <dbReference type="ChEBI" id="CHEBI:77874"/>
        <dbReference type="ChEBI" id="CHEBI:456216"/>
        <dbReference type="EC" id="6.3.5.9"/>
    </reaction>
</comment>
<comment type="cofactor">
    <cofactor evidence="1">
        <name>Mg(2+)</name>
        <dbReference type="ChEBI" id="CHEBI:18420"/>
    </cofactor>
</comment>
<comment type="pathway">
    <text evidence="1">Cofactor biosynthesis; adenosylcobalamin biosynthesis; cob(II)yrinate a,c-diamide from precorrin-2 (aerobic route): step 9/10.</text>
</comment>
<comment type="domain">
    <text evidence="1">Comprises of two domains. The C-terminal domain contains the binding site for glutamine and catalyzes the hydrolysis of this substrate to glutamate and ammonia. The N-terminal domain is anticipated to bind ATP and hydrogenobyrinate and catalyzes the ultimate synthesis of the diamide product. The ammonia produced via the glutaminase domain is probably translocated to the adjacent domain via a molecular tunnel, where it reacts with an activated intermediate.</text>
</comment>
<comment type="miscellaneous">
    <text evidence="1">The a and c carboxylates of hydrogenobyrinate are activated for nucleophilic attack via formation of a phosphorylated intermediate by ATP. CobB catalyzes first the amidation of the c-carboxylate, and then that of the a-carboxylate.</text>
</comment>
<comment type="similarity">
    <text evidence="1">Belongs to the CobB/CbiA family.</text>
</comment>